<feature type="chain" id="PRO_0000099817" description="Light-harvesting protein B-800/820 beta-2 chain">
    <location>
        <begin position="1"/>
        <end position="41"/>
    </location>
</feature>
<feature type="topological domain" description="Cytoplasmic" evidence="1">
    <location>
        <begin position="1"/>
        <end position="13"/>
    </location>
</feature>
<feature type="transmembrane region" description="Helical" evidence="1">
    <location>
        <begin position="14"/>
        <end position="36"/>
    </location>
</feature>
<feature type="topological domain" description="Periplasmic" evidence="1">
    <location>
        <begin position="37"/>
        <end position="41"/>
    </location>
</feature>
<feature type="binding site" description="axial binding residue" evidence="1">
    <location>
        <position position="12"/>
    </location>
    <ligand>
        <name>a bacteriochlorophyll</name>
        <dbReference type="ChEBI" id="CHEBI:38201"/>
    </ligand>
    <ligandPart>
        <name>Mg</name>
        <dbReference type="ChEBI" id="CHEBI:25107"/>
    </ligandPart>
</feature>
<feature type="binding site" description="axial binding residue" evidence="1">
    <location>
        <position position="30"/>
    </location>
    <ligand>
        <name>a bacteriochlorophyll</name>
        <dbReference type="ChEBI" id="CHEBI:38201"/>
    </ligand>
    <ligandPart>
        <name>Mg</name>
        <dbReference type="ChEBI" id="CHEBI:25107"/>
    </ligandPart>
</feature>
<dbReference type="SMR" id="P35096"/>
<dbReference type="GO" id="GO:0005886">
    <property type="term" value="C:plasma membrane"/>
    <property type="evidence" value="ECO:0007669"/>
    <property type="project" value="UniProtKB-SubCell"/>
</dbReference>
<dbReference type="GO" id="GO:0030077">
    <property type="term" value="C:plasma membrane light-harvesting complex"/>
    <property type="evidence" value="ECO:0007669"/>
    <property type="project" value="InterPro"/>
</dbReference>
<dbReference type="GO" id="GO:0042314">
    <property type="term" value="F:bacteriochlorophyll binding"/>
    <property type="evidence" value="ECO:0007669"/>
    <property type="project" value="UniProtKB-KW"/>
</dbReference>
<dbReference type="GO" id="GO:0045156">
    <property type="term" value="F:electron transporter, transferring electrons within the cyclic electron transport pathway of photosynthesis activity"/>
    <property type="evidence" value="ECO:0007669"/>
    <property type="project" value="InterPro"/>
</dbReference>
<dbReference type="GO" id="GO:0046872">
    <property type="term" value="F:metal ion binding"/>
    <property type="evidence" value="ECO:0007669"/>
    <property type="project" value="UniProtKB-KW"/>
</dbReference>
<dbReference type="GO" id="GO:0019684">
    <property type="term" value="P:photosynthesis, light reaction"/>
    <property type="evidence" value="ECO:0007669"/>
    <property type="project" value="InterPro"/>
</dbReference>
<dbReference type="Gene3D" id="1.20.5.250">
    <property type="match status" value="1"/>
</dbReference>
<dbReference type="InterPro" id="IPR000066">
    <property type="entry name" value="Antenna_a/b"/>
</dbReference>
<dbReference type="InterPro" id="IPR023623">
    <property type="entry name" value="Antenna_beta_CS"/>
</dbReference>
<dbReference type="InterPro" id="IPR023624">
    <property type="entry name" value="Antenna_beta_dom_sf"/>
</dbReference>
<dbReference type="InterPro" id="IPR002362">
    <property type="entry name" value="LHB-1/5"/>
</dbReference>
<dbReference type="InterPro" id="IPR035889">
    <property type="entry name" value="Light-harvesting_complex"/>
</dbReference>
<dbReference type="Pfam" id="PF00556">
    <property type="entry name" value="LHC"/>
    <property type="match status" value="1"/>
</dbReference>
<dbReference type="PIRSF" id="PIRSF002900">
    <property type="entry name" value="Antenna_beta"/>
    <property type="match status" value="1"/>
</dbReference>
<dbReference type="PRINTS" id="PR00674">
    <property type="entry name" value="LIGHTHARVSTB"/>
</dbReference>
<dbReference type="SUPFAM" id="SSF56918">
    <property type="entry name" value="Light-harvesting complex subunits"/>
    <property type="match status" value="1"/>
</dbReference>
<dbReference type="PROSITE" id="PS00969">
    <property type="entry name" value="ANTENNA_COMP_BETA"/>
    <property type="match status" value="1"/>
</dbReference>
<evidence type="ECO:0000255" key="1"/>
<evidence type="ECO:0000305" key="2"/>
<proteinExistence type="evidence at protein level"/>
<reference key="1">
    <citation type="book" date="1987" name="Progress in photosynthesis research">
        <editorList>
            <person name="Biggins J."/>
        </editorList>
        <authorList>
            <person name="Brunisholz R.A."/>
            <person name="Bissig I."/>
            <person name="Niederer E."/>
            <person name="Suter F."/>
            <person name="Zuber H."/>
        </authorList>
    </citation>
    <scope>PROTEIN SEQUENCE</scope>
    <source>
        <strain>DSM 141 / 7750 / LMG 4302</strain>
    </source>
</reference>
<sequence>AVLSPEQSEELHKYVIDGARAFLGIALVAHFLAFSATPWLH</sequence>
<keyword id="KW-0042">Antenna complex</keyword>
<keyword id="KW-0076">Bacteriochlorophyll</keyword>
<keyword id="KW-0997">Cell inner membrane</keyword>
<keyword id="KW-1003">Cell membrane</keyword>
<keyword id="KW-0148">Chlorophyll</keyword>
<keyword id="KW-0157">Chromophore</keyword>
<keyword id="KW-0903">Direct protein sequencing</keyword>
<keyword id="KW-0437">Light-harvesting polypeptide</keyword>
<keyword id="KW-0460">Magnesium</keyword>
<keyword id="KW-0472">Membrane</keyword>
<keyword id="KW-0479">Metal-binding</keyword>
<keyword id="KW-0812">Transmembrane</keyword>
<keyword id="KW-1133">Transmembrane helix</keyword>
<comment type="function">
    <text>Antenna complexes are light-harvesting systems, which transfer the excitation energy to the reaction centers.</text>
</comment>
<comment type="subunit">
    <text>The core complex is formed by different alpha and beta chains, binding bacteriochlorophyll molecules, and arranged most probably in tetrameric structures disposed around the reaction center. The non-pigmented gamma chains may constitute additional components.</text>
</comment>
<comment type="subcellular location">
    <subcellularLocation>
        <location>Cell inner membrane</location>
        <topology>Single-pass type II membrane protein</topology>
    </subcellularLocation>
</comment>
<comment type="similarity">
    <text evidence="2">Belongs to the antenna complex beta subunit family.</text>
</comment>
<accession>P35096</accession>
<organism>
    <name type="scientific">Rhodoblastus acidophilus</name>
    <name type="common">Rhodopseudomonas acidophila</name>
    <dbReference type="NCBI Taxonomy" id="1074"/>
    <lineage>
        <taxon>Bacteria</taxon>
        <taxon>Pseudomonadati</taxon>
        <taxon>Pseudomonadota</taxon>
        <taxon>Alphaproteobacteria</taxon>
        <taxon>Hyphomicrobiales</taxon>
        <taxon>Rhodoblastaceae</taxon>
        <taxon>Rhodoblastus</taxon>
    </lineage>
</organism>
<protein>
    <recommendedName>
        <fullName>Light-harvesting protein B-800/820 beta-2 chain</fullName>
    </recommendedName>
    <alternativeName>
        <fullName>Antenna pigment protein beta-2 chain</fullName>
    </alternativeName>
</protein>
<name>LHB3_RHOAC</name>